<organism>
    <name type="scientific">Mycobacterium bovis (strain ATCC BAA-935 / AF2122/97)</name>
    <dbReference type="NCBI Taxonomy" id="233413"/>
    <lineage>
        <taxon>Bacteria</taxon>
        <taxon>Bacillati</taxon>
        <taxon>Actinomycetota</taxon>
        <taxon>Actinomycetes</taxon>
        <taxon>Mycobacteriales</taxon>
        <taxon>Mycobacteriaceae</taxon>
        <taxon>Mycobacterium</taxon>
        <taxon>Mycobacterium tuberculosis complex</taxon>
    </lineage>
</organism>
<feature type="chain" id="PRO_0000101569" description="Ribosomal RNA small subunit methyltransferase A">
    <location>
        <begin position="1"/>
        <end position="317"/>
    </location>
</feature>
<feature type="region of interest" description="Disordered" evidence="2">
    <location>
        <begin position="293"/>
        <end position="317"/>
    </location>
</feature>
<feature type="binding site" evidence="1">
    <location>
        <position position="37"/>
    </location>
    <ligand>
        <name>S-adenosyl-L-methionine</name>
        <dbReference type="ChEBI" id="CHEBI:59789"/>
    </ligand>
</feature>
<feature type="binding site" evidence="1">
    <location>
        <position position="39"/>
    </location>
    <ligand>
        <name>S-adenosyl-L-methionine</name>
        <dbReference type="ChEBI" id="CHEBI:59789"/>
    </ligand>
</feature>
<feature type="binding site" evidence="1">
    <location>
        <position position="64"/>
    </location>
    <ligand>
        <name>S-adenosyl-L-methionine</name>
        <dbReference type="ChEBI" id="CHEBI:59789"/>
    </ligand>
</feature>
<feature type="binding site" evidence="1">
    <location>
        <position position="85"/>
    </location>
    <ligand>
        <name>S-adenosyl-L-methionine</name>
        <dbReference type="ChEBI" id="CHEBI:59789"/>
    </ligand>
</feature>
<feature type="binding site" evidence="1">
    <location>
        <position position="115"/>
    </location>
    <ligand>
        <name>S-adenosyl-L-methionine</name>
        <dbReference type="ChEBI" id="CHEBI:59789"/>
    </ligand>
</feature>
<feature type="binding site" evidence="1">
    <location>
        <position position="134"/>
    </location>
    <ligand>
        <name>S-adenosyl-L-methionine</name>
        <dbReference type="ChEBI" id="CHEBI:59789"/>
    </ligand>
</feature>
<protein>
    <recommendedName>
        <fullName evidence="1">Ribosomal RNA small subunit methyltransferase A</fullName>
        <ecNumber evidence="1">2.1.1.182</ecNumber>
    </recommendedName>
    <alternativeName>
        <fullName evidence="1">16S rRNA (adenine(1518)-N(6)/adenine(1519)-N(6))-dimethyltransferase</fullName>
    </alternativeName>
    <alternativeName>
        <fullName evidence="1">16S rRNA dimethyladenosine transferase</fullName>
    </alternativeName>
    <alternativeName>
        <fullName evidence="1">16S rRNA dimethylase</fullName>
    </alternativeName>
    <alternativeName>
        <fullName evidence="1">S-adenosylmethionine-6-N', N'-adenosyl(rRNA) dimethyltransferase</fullName>
    </alternativeName>
</protein>
<comment type="function">
    <text evidence="1">Specifically dimethylates two adjacent adenosines (A1518 and A1519) in the loop of a conserved hairpin near the 3'-end of 16S rRNA in the 30S particle. May play a critical role in biogenesis of 30S subunits.</text>
</comment>
<comment type="catalytic activity">
    <reaction evidence="1">
        <text>adenosine(1518)/adenosine(1519) in 16S rRNA + 4 S-adenosyl-L-methionine = N(6)-dimethyladenosine(1518)/N(6)-dimethyladenosine(1519) in 16S rRNA + 4 S-adenosyl-L-homocysteine + 4 H(+)</text>
        <dbReference type="Rhea" id="RHEA:19609"/>
        <dbReference type="Rhea" id="RHEA-COMP:10232"/>
        <dbReference type="Rhea" id="RHEA-COMP:10233"/>
        <dbReference type="ChEBI" id="CHEBI:15378"/>
        <dbReference type="ChEBI" id="CHEBI:57856"/>
        <dbReference type="ChEBI" id="CHEBI:59789"/>
        <dbReference type="ChEBI" id="CHEBI:74411"/>
        <dbReference type="ChEBI" id="CHEBI:74493"/>
        <dbReference type="EC" id="2.1.1.182"/>
    </reaction>
</comment>
<comment type="subcellular location">
    <subcellularLocation>
        <location evidence="1">Cytoplasm</location>
    </subcellularLocation>
</comment>
<comment type="similarity">
    <text evidence="1">Belongs to the class I-like SAM-binding methyltransferase superfamily. rRNA adenine N(6)-methyltransferase family. RsmA subfamily.</text>
</comment>
<reference key="1">
    <citation type="journal article" date="2003" name="Proc. Natl. Acad. Sci. U.S.A.">
        <title>The complete genome sequence of Mycobacterium bovis.</title>
        <authorList>
            <person name="Garnier T."/>
            <person name="Eiglmeier K."/>
            <person name="Camus J.-C."/>
            <person name="Medina N."/>
            <person name="Mansoor H."/>
            <person name="Pryor M."/>
            <person name="Duthoy S."/>
            <person name="Grondin S."/>
            <person name="Lacroix C."/>
            <person name="Monsempe C."/>
            <person name="Simon S."/>
            <person name="Harris B."/>
            <person name="Atkin R."/>
            <person name="Doggett J."/>
            <person name="Mayes R."/>
            <person name="Keating L."/>
            <person name="Wheeler P.R."/>
            <person name="Parkhill J."/>
            <person name="Barrell B.G."/>
            <person name="Cole S.T."/>
            <person name="Gordon S.V."/>
            <person name="Hewinson R.G."/>
        </authorList>
    </citation>
    <scope>NUCLEOTIDE SEQUENCE [LARGE SCALE GENOMIC DNA]</scope>
    <source>
        <strain>ATCC BAA-935 / AF2122/97</strain>
    </source>
</reference>
<reference key="2">
    <citation type="journal article" date="2017" name="Genome Announc.">
        <title>Updated reference genome sequence and annotation of Mycobacterium bovis AF2122/97.</title>
        <authorList>
            <person name="Malone K.M."/>
            <person name="Farrell D."/>
            <person name="Stuber T.P."/>
            <person name="Schubert O.T."/>
            <person name="Aebersold R."/>
            <person name="Robbe-Austerman S."/>
            <person name="Gordon S.V."/>
        </authorList>
    </citation>
    <scope>NUCLEOTIDE SEQUENCE [LARGE SCALE GENOMIC DNA]</scope>
    <scope>GENOME REANNOTATION</scope>
    <source>
        <strain>ATCC BAA-935 / AF2122/97</strain>
    </source>
</reference>
<proteinExistence type="inferred from homology"/>
<keyword id="KW-0963">Cytoplasm</keyword>
<keyword id="KW-0489">Methyltransferase</keyword>
<keyword id="KW-1185">Reference proteome</keyword>
<keyword id="KW-0694">RNA-binding</keyword>
<keyword id="KW-0698">rRNA processing</keyword>
<keyword id="KW-0949">S-adenosyl-L-methionine</keyword>
<keyword id="KW-0808">Transferase</keyword>
<evidence type="ECO:0000255" key="1">
    <source>
        <dbReference type="HAMAP-Rule" id="MF_00607"/>
    </source>
</evidence>
<evidence type="ECO:0000256" key="2">
    <source>
        <dbReference type="SAM" id="MobiDB-lite"/>
    </source>
</evidence>
<accession>P66661</accession>
<accession>A0A1R3XX35</accession>
<accession>O05595</accession>
<accession>X2BGQ3</accession>
<gene>
    <name evidence="1" type="primary">rsmA</name>
    <name evidence="1" type="synonym">ksgA</name>
    <name type="ordered locus">BQ2027_MB1037</name>
</gene>
<dbReference type="EC" id="2.1.1.182" evidence="1"/>
<dbReference type="EMBL" id="LT708304">
    <property type="protein sequence ID" value="SIT99637.1"/>
    <property type="molecule type" value="Genomic_DNA"/>
</dbReference>
<dbReference type="RefSeq" id="NP_854694.1">
    <property type="nucleotide sequence ID" value="NC_002945.3"/>
</dbReference>
<dbReference type="RefSeq" id="WP_003405191.1">
    <property type="nucleotide sequence ID" value="NC_002945.4"/>
</dbReference>
<dbReference type="SMR" id="P66661"/>
<dbReference type="GeneID" id="45424982"/>
<dbReference type="KEGG" id="mbo:BQ2027_MB1037"/>
<dbReference type="PATRIC" id="fig|233413.5.peg.1129"/>
<dbReference type="Proteomes" id="UP000001419">
    <property type="component" value="Chromosome"/>
</dbReference>
<dbReference type="GO" id="GO:0005829">
    <property type="term" value="C:cytosol"/>
    <property type="evidence" value="ECO:0007669"/>
    <property type="project" value="TreeGrafter"/>
</dbReference>
<dbReference type="GO" id="GO:0052908">
    <property type="term" value="F:16S rRNA (adenine(1518)-N(6)/adenine(1519)-N(6))-dimethyltransferase activity"/>
    <property type="evidence" value="ECO:0007669"/>
    <property type="project" value="UniProtKB-EC"/>
</dbReference>
<dbReference type="GO" id="GO:0003723">
    <property type="term" value="F:RNA binding"/>
    <property type="evidence" value="ECO:0007669"/>
    <property type="project" value="UniProtKB-KW"/>
</dbReference>
<dbReference type="CDD" id="cd02440">
    <property type="entry name" value="AdoMet_MTases"/>
    <property type="match status" value="1"/>
</dbReference>
<dbReference type="FunFam" id="1.10.8.100:FF:000003">
    <property type="entry name" value="Ribosomal RNA small subunit methyltransferase A"/>
    <property type="match status" value="1"/>
</dbReference>
<dbReference type="FunFam" id="3.40.50.150:FF:000023">
    <property type="entry name" value="Ribosomal RNA small subunit methyltransferase A"/>
    <property type="match status" value="1"/>
</dbReference>
<dbReference type="Gene3D" id="1.10.8.100">
    <property type="entry name" value="Ribosomal RNA adenine dimethylase-like, domain 2"/>
    <property type="match status" value="1"/>
</dbReference>
<dbReference type="Gene3D" id="3.40.50.150">
    <property type="entry name" value="Vaccinia Virus protein VP39"/>
    <property type="match status" value="1"/>
</dbReference>
<dbReference type="HAMAP" id="MF_00607">
    <property type="entry name" value="16SrRNA_methyltr_A"/>
    <property type="match status" value="1"/>
</dbReference>
<dbReference type="InterPro" id="IPR001737">
    <property type="entry name" value="KsgA/Erm"/>
</dbReference>
<dbReference type="InterPro" id="IPR023165">
    <property type="entry name" value="rRNA_Ade_diMease-like_C"/>
</dbReference>
<dbReference type="InterPro" id="IPR020596">
    <property type="entry name" value="rRNA_Ade_Mease_Trfase_CS"/>
</dbReference>
<dbReference type="InterPro" id="IPR020598">
    <property type="entry name" value="rRNA_Ade_methylase_Trfase_N"/>
</dbReference>
<dbReference type="InterPro" id="IPR011530">
    <property type="entry name" value="rRNA_adenine_dimethylase"/>
</dbReference>
<dbReference type="InterPro" id="IPR029063">
    <property type="entry name" value="SAM-dependent_MTases_sf"/>
</dbReference>
<dbReference type="NCBIfam" id="TIGR00755">
    <property type="entry name" value="ksgA"/>
    <property type="match status" value="1"/>
</dbReference>
<dbReference type="PANTHER" id="PTHR11727">
    <property type="entry name" value="DIMETHYLADENOSINE TRANSFERASE"/>
    <property type="match status" value="1"/>
</dbReference>
<dbReference type="PANTHER" id="PTHR11727:SF7">
    <property type="entry name" value="DIMETHYLADENOSINE TRANSFERASE-RELATED"/>
    <property type="match status" value="1"/>
</dbReference>
<dbReference type="Pfam" id="PF00398">
    <property type="entry name" value="RrnaAD"/>
    <property type="match status" value="1"/>
</dbReference>
<dbReference type="SMART" id="SM00650">
    <property type="entry name" value="rADc"/>
    <property type="match status" value="1"/>
</dbReference>
<dbReference type="SUPFAM" id="SSF53335">
    <property type="entry name" value="S-adenosyl-L-methionine-dependent methyltransferases"/>
    <property type="match status" value="1"/>
</dbReference>
<dbReference type="PROSITE" id="PS01131">
    <property type="entry name" value="RRNA_A_DIMETH"/>
    <property type="match status" value="1"/>
</dbReference>
<dbReference type="PROSITE" id="PS51689">
    <property type="entry name" value="SAM_RNA_A_N6_MT"/>
    <property type="match status" value="1"/>
</dbReference>
<sequence>MCCTSGCALTIRLLGRTEIRRLAKELDFRPRKSLGQNFVHDANTVRRVVAASGVSRSDLVLEVGPGLGSLTLALLDRGATVTAVEIDPLLASRLQQTVAEHSHSEVHRLTVVNRDVLALRREDLAAAPTAVVANLPYNVAVPALLHLLVEFPSIRVVTVMVQAEVAERLAAEPGSKEYGVPSVKLRFFGRVRRCGMVSPTVFWPIPRVYSGLVRIDRYETSPWPTDDAFRRRVFELVDIAFAQRRKTSRNAFVQWAGSGSESANRLLAASIDPARRGETLSIDDFVRLLRRSGGSDEATSTGRDARAPDISGHASAS</sequence>
<name>RSMA_MYCBO</name>